<organismHost>
    <name type="scientific">Aves</name>
    <dbReference type="NCBI Taxonomy" id="8782"/>
</organismHost>
<organismHost>
    <name type="scientific">Sus scrofa</name>
    <name type="common">Pig</name>
    <dbReference type="NCBI Taxonomy" id="9823"/>
</organismHost>
<protein>
    <recommendedName>
        <fullName evidence="1">Neuraminidase</fullName>
        <ecNumber evidence="1">3.2.1.18</ecNumber>
    </recommendedName>
</protein>
<proteinExistence type="inferred from homology"/>
<reference key="1">
    <citation type="journal article" date="1990" name="J. Virol.">
        <title>Evolution of the nucleoprotein gene of influenza A virus.</title>
        <authorList>
            <person name="Gorman O.T."/>
            <person name="Bean W.J."/>
            <person name="Kawaoka Y."/>
            <person name="Webster R.G."/>
        </authorList>
    </citation>
    <scope>NUCLEOTIDE SEQUENCE [GENOMIC RNA]</scope>
</reference>
<reference key="2">
    <citation type="journal article" date="2006" name="Science">
        <title>Large-scale sequence analysis of avian influenza isolates.</title>
        <authorList>
            <person name="Obenauer J.C."/>
            <person name="Denson J."/>
            <person name="Mehta P.K."/>
            <person name="Su X."/>
            <person name="Mukatira S."/>
            <person name="Finkelstein D.B."/>
            <person name="Xu X."/>
            <person name="Wang J."/>
            <person name="Ma J."/>
            <person name="Fan Y."/>
            <person name="Rakestraw K.M."/>
            <person name="Webster R.G."/>
            <person name="Hoffmann E."/>
            <person name="Krauss S."/>
            <person name="Zheng J."/>
            <person name="Zhang Z."/>
            <person name="Naeve C.W."/>
        </authorList>
    </citation>
    <scope>NUCLEOTIDE SEQUENCE [GENOMIC RNA]</scope>
</reference>
<name>NRAM_I56A1</name>
<organism>
    <name type="scientific">Influenza A virus (strain A/Duck/Czechoslovakia/1956 H4N6)</name>
    <dbReference type="NCBI Taxonomy" id="385590"/>
    <lineage>
        <taxon>Viruses</taxon>
        <taxon>Riboviria</taxon>
        <taxon>Orthornavirae</taxon>
        <taxon>Negarnaviricota</taxon>
        <taxon>Polyploviricotina</taxon>
        <taxon>Insthoviricetes</taxon>
        <taxon>Articulavirales</taxon>
        <taxon>Orthomyxoviridae</taxon>
        <taxon>Alphainfluenzavirus</taxon>
        <taxon>Alphainfluenzavirus influenzae</taxon>
        <taxon>Influenza A virus</taxon>
    </lineage>
</organism>
<dbReference type="EC" id="3.2.1.18" evidence="1"/>
<dbReference type="EMBL" id="AB295612">
    <property type="protein sequence ID" value="BAF48479.1"/>
    <property type="molecule type" value="Genomic_RNA"/>
</dbReference>
<dbReference type="SMR" id="A3KF10"/>
<dbReference type="CAZy" id="GH34">
    <property type="family name" value="Glycoside Hydrolase Family 34"/>
</dbReference>
<dbReference type="GlyCosmos" id="A3KF10">
    <property type="glycosylation" value="9 sites, No reported glycans"/>
</dbReference>
<dbReference type="Proteomes" id="UP000008434">
    <property type="component" value="Genome"/>
</dbReference>
<dbReference type="GO" id="GO:0020002">
    <property type="term" value="C:host cell plasma membrane"/>
    <property type="evidence" value="ECO:0007669"/>
    <property type="project" value="UniProtKB-SubCell"/>
</dbReference>
<dbReference type="GO" id="GO:0016020">
    <property type="term" value="C:membrane"/>
    <property type="evidence" value="ECO:0007669"/>
    <property type="project" value="UniProtKB-UniRule"/>
</dbReference>
<dbReference type="GO" id="GO:0055036">
    <property type="term" value="C:virion membrane"/>
    <property type="evidence" value="ECO:0007669"/>
    <property type="project" value="UniProtKB-SubCell"/>
</dbReference>
<dbReference type="GO" id="GO:0004308">
    <property type="term" value="F:exo-alpha-sialidase activity"/>
    <property type="evidence" value="ECO:0007669"/>
    <property type="project" value="UniProtKB-UniRule"/>
</dbReference>
<dbReference type="GO" id="GO:0046872">
    <property type="term" value="F:metal ion binding"/>
    <property type="evidence" value="ECO:0007669"/>
    <property type="project" value="UniProtKB-UniRule"/>
</dbReference>
<dbReference type="GO" id="GO:0005975">
    <property type="term" value="P:carbohydrate metabolic process"/>
    <property type="evidence" value="ECO:0007669"/>
    <property type="project" value="InterPro"/>
</dbReference>
<dbReference type="GO" id="GO:0046761">
    <property type="term" value="P:viral budding from plasma membrane"/>
    <property type="evidence" value="ECO:0007669"/>
    <property type="project" value="UniProtKB-UniRule"/>
</dbReference>
<dbReference type="Gene3D" id="2.120.10.10">
    <property type="match status" value="1"/>
</dbReference>
<dbReference type="HAMAP" id="MF_04071">
    <property type="entry name" value="INFV_NRAM"/>
    <property type="match status" value="1"/>
</dbReference>
<dbReference type="InterPro" id="IPR001860">
    <property type="entry name" value="Glyco_hydro_34"/>
</dbReference>
<dbReference type="InterPro" id="IPR036278">
    <property type="entry name" value="Sialidase_sf"/>
</dbReference>
<dbReference type="Pfam" id="PF00064">
    <property type="entry name" value="Neur"/>
    <property type="match status" value="1"/>
</dbReference>
<dbReference type="SUPFAM" id="SSF50939">
    <property type="entry name" value="Sialidases"/>
    <property type="match status" value="1"/>
</dbReference>
<accession>A3KF10</accession>
<feature type="chain" id="PRO_0000402431" description="Neuraminidase">
    <location>
        <begin position="1"/>
        <end position="470"/>
    </location>
</feature>
<feature type="topological domain" description="Intravirion" evidence="1">
    <location>
        <begin position="1"/>
        <end position="6"/>
    </location>
</feature>
<feature type="transmembrane region" description="Helical" evidence="1">
    <location>
        <begin position="7"/>
        <end position="27"/>
    </location>
</feature>
<feature type="topological domain" description="Virion surface" evidence="1">
    <location>
        <begin position="28"/>
        <end position="470"/>
    </location>
</feature>
<feature type="region of interest" description="Involved in apical transport and lipid raft association" evidence="1">
    <location>
        <begin position="11"/>
        <end position="33"/>
    </location>
</feature>
<feature type="region of interest" description="Hypervariable stalk region" evidence="1">
    <location>
        <begin position="36"/>
        <end position="88"/>
    </location>
</feature>
<feature type="region of interest" description="Head of neuraminidase" evidence="1">
    <location>
        <begin position="91"/>
        <end position="470"/>
    </location>
</feature>
<feature type="active site" description="Proton donor/acceptor" evidence="1">
    <location>
        <position position="151"/>
    </location>
</feature>
<feature type="active site" description="Nucleophile" evidence="1">
    <location>
        <position position="406"/>
    </location>
</feature>
<feature type="binding site" evidence="1">
    <location>
        <position position="118"/>
    </location>
    <ligand>
        <name>substrate</name>
    </ligand>
</feature>
<feature type="binding site" evidence="1">
    <location>
        <position position="152"/>
    </location>
    <ligand>
        <name>substrate</name>
    </ligand>
</feature>
<feature type="binding site" evidence="1">
    <location>
        <begin position="277"/>
        <end position="278"/>
    </location>
    <ligand>
        <name>substrate</name>
    </ligand>
</feature>
<feature type="binding site" evidence="1">
    <location>
        <position position="293"/>
    </location>
    <ligand>
        <name>substrate</name>
    </ligand>
</feature>
<feature type="binding site" evidence="1">
    <location>
        <position position="294"/>
    </location>
    <ligand>
        <name>Ca(2+)</name>
        <dbReference type="ChEBI" id="CHEBI:29108"/>
    </ligand>
</feature>
<feature type="binding site" evidence="1">
    <location>
        <position position="298"/>
    </location>
    <ligand>
        <name>Ca(2+)</name>
        <dbReference type="ChEBI" id="CHEBI:29108"/>
    </ligand>
</feature>
<feature type="binding site" evidence="1">
    <location>
        <position position="325"/>
    </location>
    <ligand>
        <name>Ca(2+)</name>
        <dbReference type="ChEBI" id="CHEBI:29108"/>
    </ligand>
</feature>
<feature type="binding site" evidence="1">
    <location>
        <position position="372"/>
    </location>
    <ligand>
        <name>substrate</name>
    </ligand>
</feature>
<feature type="glycosylation site" description="N-linked (GlcNAc...) asparagine; by host" evidence="1">
    <location>
        <position position="51"/>
    </location>
</feature>
<feature type="glycosylation site" description="N-linked (GlcNAc...) asparagine; by host" evidence="1">
    <location>
        <position position="54"/>
    </location>
</feature>
<feature type="glycosylation site" description="N-linked (GlcNAc...) asparagine; by host" evidence="1">
    <location>
        <position position="62"/>
    </location>
</feature>
<feature type="glycosylation site" description="N-linked (GlcNAc...) asparagine; by host" evidence="1">
    <location>
        <position position="67"/>
    </location>
</feature>
<feature type="glycosylation site" description="N-linked (GlcNAc...) asparagine; by host" evidence="1">
    <location>
        <position position="70"/>
    </location>
</feature>
<feature type="glycosylation site" description="N-linked (GlcNAc...) asparagine; by host" evidence="1">
    <location>
        <position position="86"/>
    </location>
</feature>
<feature type="glycosylation site" description="N-linked (GlcNAc...) asparagine; by host" evidence="1">
    <location>
        <position position="146"/>
    </location>
</feature>
<feature type="glycosylation site" description="N-linked (GlcNAc...) asparagine; by host" evidence="1">
    <location>
        <position position="201"/>
    </location>
</feature>
<feature type="glycosylation site" description="N-linked (GlcNAc...) asparagine; by host" evidence="1">
    <location>
        <position position="402"/>
    </location>
</feature>
<feature type="disulfide bond" evidence="1">
    <location>
        <begin position="92"/>
        <end position="419"/>
    </location>
</feature>
<feature type="disulfide bond" evidence="1">
    <location>
        <begin position="124"/>
        <end position="129"/>
    </location>
</feature>
<feature type="disulfide bond" evidence="1">
    <location>
        <begin position="184"/>
        <end position="231"/>
    </location>
</feature>
<feature type="disulfide bond" evidence="1">
    <location>
        <begin position="233"/>
        <end position="238"/>
    </location>
</feature>
<feature type="disulfide bond" evidence="1">
    <location>
        <begin position="279"/>
        <end position="292"/>
    </location>
</feature>
<feature type="disulfide bond" evidence="1">
    <location>
        <begin position="281"/>
        <end position="290"/>
    </location>
</feature>
<feature type="disulfide bond" evidence="1">
    <location>
        <begin position="319"/>
        <end position="337"/>
    </location>
</feature>
<feature type="disulfide bond" evidence="1">
    <location>
        <begin position="423"/>
        <end position="449"/>
    </location>
</feature>
<comment type="function">
    <text evidence="1">Catalyzes the removal of terminal sialic acid residues from viral and cellular glycoconjugates. Cleaves off the terminal sialic acids on the glycosylated HA during virus budding to facilitate virus release. Additionally helps virus spread through the circulation by further removing sialic acids from the cell surface. These cleavages prevent self-aggregation and ensure the efficient spread of the progeny virus from cell to cell. Otherwise, infection would be limited to one round of replication. Described as a receptor-destroying enzyme because it cleaves a terminal sialic acid from the cellular receptors. May facilitate viral invasion of the upper airways by cleaving the sialic acid moieties on the mucin of the airway epithelial cells. Likely to plays a role in the budding process through its association with lipid rafts during intracellular transport. May additionally display a raft-association independent effect on budding. Plays a role in the determination of host range restriction on replication and virulence. Sialidase activity in late endosome/lysosome traffic seems to enhance virus replication.</text>
</comment>
<comment type="catalytic activity">
    <reaction evidence="1">
        <text>Hydrolysis of alpha-(2-&gt;3)-, alpha-(2-&gt;6)-, alpha-(2-&gt;8)- glycosidic linkages of terminal sialic acid residues in oligosaccharides, glycoproteins, glycolipids, colominic acid and synthetic substrates.</text>
        <dbReference type="EC" id="3.2.1.18"/>
    </reaction>
</comment>
<comment type="cofactor">
    <cofactor evidence="1">
        <name>Ca(2+)</name>
        <dbReference type="ChEBI" id="CHEBI:29108"/>
    </cofactor>
</comment>
<comment type="activity regulation">
    <text evidence="1">Inhibited by the neuraminidase inhibitors zanamivir (Relenza) and oseltamivir (Tamiflu). These drugs interfere with the release of progeny virus from infected cells and are effective against all influenza strains. Resistance to neuraminidase inhibitors is quite rare.</text>
</comment>
<comment type="subunit">
    <text evidence="1">Homotetramer.</text>
</comment>
<comment type="subcellular location">
    <subcellularLocation>
        <location evidence="1">Virion membrane</location>
    </subcellularLocation>
    <subcellularLocation>
        <location evidence="1">Host apical cell membrane</location>
        <topology evidence="1">Single-pass type II membrane protein</topology>
    </subcellularLocation>
    <text evidence="1">Preferentially accumulates at the apical plasma membrane in infected polarized epithelial cells, which is the virus assembly site. Uses lipid rafts for cell surface transport and apical sorting. In the virion, forms a mushroom-shaped spike on the surface of the membrane.</text>
</comment>
<comment type="domain">
    <text evidence="1">Intact N-terminus is essential for virion morphogenesis. Possesses two apical sorting signals, one in the ectodomain, which is likely to be a glycan, and the other in the transmembrane domain. The transmembrane domain also plays a role in lipid raft association.</text>
</comment>
<comment type="PTM">
    <text evidence="1">N-glycosylated.</text>
</comment>
<comment type="miscellaneous">
    <text>The influenza A genome consist of 8 RNA segments. Genetic variation of hemagglutinin and/or neuraminidase genes results in the emergence of new influenza strains. The mechanism of variation can be the result of point mutations or the result of genetic reassortment between segments of two different strains.</text>
</comment>
<comment type="similarity">
    <text evidence="1">Belongs to the glycosyl hydrolase 34 family.</text>
</comment>
<sequence length="470" mass="51721">MNPNQKIICISATGMTLSVVSLLIGIANLGLNIGLHYKVGDTPDVNIPNVNRTNSTTTIINNNTQNNFTNITNIIQNKNEERTFLNLTKPLCEVNSWHILSKDNAIRIGEDAHILVTREPYLSCDPQGCRMFALSQGTTLRGRHANGTIHDRSPFRALVSWEMGQAPSPYNAKVECIGWSSTSCHDGISRMSICMSGPNNNASAVVWYGGRPVTEIPSWAGNILRTQESECVCHKGVCPVVMTDGPATNRAATKIIYFKEGKIQKIEELTGKAQHIEECSCYGAGGVIKCICRDNWKGANRPVITIDPEIMTHTSKYLCSKVLTDTSRPNDPTNGNCDAPITGGSPDPGVKGFAFLDGENSWLGRTISKDSRSGYEMLKVPNAETDTQSGPISHQMIVNNQNWSGYSGAFIDYWANKECFNPCFYVELIRGRPKESSVLWTSNSIVALCGSRERLGSWSWHDGAEIIYFK</sequence>
<evidence type="ECO:0000255" key="1">
    <source>
        <dbReference type="HAMAP-Rule" id="MF_04071"/>
    </source>
</evidence>
<keyword id="KW-0106">Calcium</keyword>
<keyword id="KW-1015">Disulfide bond</keyword>
<keyword id="KW-0325">Glycoprotein</keyword>
<keyword id="KW-0326">Glycosidase</keyword>
<keyword id="KW-1032">Host cell membrane</keyword>
<keyword id="KW-1043">Host membrane</keyword>
<keyword id="KW-0378">Hydrolase</keyword>
<keyword id="KW-0472">Membrane</keyword>
<keyword id="KW-0479">Metal-binding</keyword>
<keyword id="KW-0735">Signal-anchor</keyword>
<keyword id="KW-0812">Transmembrane</keyword>
<keyword id="KW-1133">Transmembrane helix</keyword>
<keyword id="KW-0946">Virion</keyword>
<gene>
    <name evidence="1" type="primary">NA</name>
</gene>